<comment type="function">
    <text evidence="3">Odorant receptor.</text>
</comment>
<comment type="subcellular location">
    <subcellularLocation>
        <location>Cell membrane</location>
        <topology>Multi-pass membrane protein</topology>
    </subcellularLocation>
</comment>
<comment type="similarity">
    <text evidence="2">Belongs to the G-protein coupled receptor 1 family.</text>
</comment>
<comment type="online information" name="Human Olfactory Receptor Data Exploratorium (HORDE)">
    <link uri="http://genome.weizmann.ac.il/horde/card/index/symbol:OR5J2"/>
</comment>
<proteinExistence type="inferred from homology"/>
<evidence type="ECO:0000255" key="1"/>
<evidence type="ECO:0000255" key="2">
    <source>
        <dbReference type="PROSITE-ProRule" id="PRU00521"/>
    </source>
</evidence>
<evidence type="ECO:0000305" key="3"/>
<protein>
    <recommendedName>
        <fullName>Olfactory receptor 5J2</fullName>
    </recommendedName>
    <alternativeName>
        <fullName>Olfactory receptor OR11-266</fullName>
    </alternativeName>
</protein>
<gene>
    <name type="primary">OR5J2</name>
</gene>
<accession>Q8NH18</accession>
<accession>Q6IEU5</accession>
<keyword id="KW-1003">Cell membrane</keyword>
<keyword id="KW-1015">Disulfide bond</keyword>
<keyword id="KW-0297">G-protein coupled receptor</keyword>
<keyword id="KW-0325">Glycoprotein</keyword>
<keyword id="KW-0472">Membrane</keyword>
<keyword id="KW-0552">Olfaction</keyword>
<keyword id="KW-0675">Receptor</keyword>
<keyword id="KW-1185">Reference proteome</keyword>
<keyword id="KW-0716">Sensory transduction</keyword>
<keyword id="KW-0807">Transducer</keyword>
<keyword id="KW-0812">Transmembrane</keyword>
<keyword id="KW-1133">Transmembrane helix</keyword>
<feature type="chain" id="PRO_0000150599" description="Olfactory receptor 5J2">
    <location>
        <begin position="1"/>
        <end position="312"/>
    </location>
</feature>
<feature type="topological domain" description="Extracellular" evidence="1">
    <location>
        <begin position="1"/>
        <end position="25"/>
    </location>
</feature>
<feature type="transmembrane region" description="Helical; Name=1" evidence="1">
    <location>
        <begin position="26"/>
        <end position="46"/>
    </location>
</feature>
<feature type="topological domain" description="Cytoplasmic" evidence="1">
    <location>
        <begin position="47"/>
        <end position="54"/>
    </location>
</feature>
<feature type="transmembrane region" description="Helical; Name=2" evidence="1">
    <location>
        <begin position="55"/>
        <end position="75"/>
    </location>
</feature>
<feature type="topological domain" description="Extracellular" evidence="1">
    <location>
        <begin position="76"/>
        <end position="99"/>
    </location>
</feature>
<feature type="transmembrane region" description="Helical; Name=3" evidence="1">
    <location>
        <begin position="100"/>
        <end position="120"/>
    </location>
</feature>
<feature type="topological domain" description="Cytoplasmic" evidence="1">
    <location>
        <begin position="121"/>
        <end position="139"/>
    </location>
</feature>
<feature type="transmembrane region" description="Helical; Name=4" evidence="1">
    <location>
        <begin position="140"/>
        <end position="160"/>
    </location>
</feature>
<feature type="topological domain" description="Extracellular" evidence="1">
    <location>
        <begin position="161"/>
        <end position="196"/>
    </location>
</feature>
<feature type="transmembrane region" description="Helical; Name=5" evidence="1">
    <location>
        <begin position="197"/>
        <end position="217"/>
    </location>
</feature>
<feature type="topological domain" description="Cytoplasmic" evidence="1">
    <location>
        <begin position="218"/>
        <end position="237"/>
    </location>
</feature>
<feature type="transmembrane region" description="Helical; Name=6" evidence="1">
    <location>
        <begin position="238"/>
        <end position="258"/>
    </location>
</feature>
<feature type="topological domain" description="Extracellular" evidence="1">
    <location>
        <begin position="259"/>
        <end position="271"/>
    </location>
</feature>
<feature type="transmembrane region" description="Helical; Name=7" evidence="1">
    <location>
        <begin position="272"/>
        <end position="292"/>
    </location>
</feature>
<feature type="topological domain" description="Cytoplasmic" evidence="1">
    <location>
        <begin position="293"/>
        <end position="312"/>
    </location>
</feature>
<feature type="glycosylation site" description="N-linked (GlcNAc...) asparagine" evidence="1">
    <location>
        <position position="5"/>
    </location>
</feature>
<feature type="disulfide bond" evidence="2">
    <location>
        <begin position="97"/>
        <end position="189"/>
    </location>
</feature>
<feature type="sequence variant" id="VAR_034226" description="In dbSNP:rs12279899.">
    <original>M</original>
    <variation>I</variation>
    <location>
        <position position="136"/>
    </location>
</feature>
<name>OR5J2_HUMAN</name>
<organism>
    <name type="scientific">Homo sapiens</name>
    <name type="common">Human</name>
    <dbReference type="NCBI Taxonomy" id="9606"/>
    <lineage>
        <taxon>Eukaryota</taxon>
        <taxon>Metazoa</taxon>
        <taxon>Chordata</taxon>
        <taxon>Craniata</taxon>
        <taxon>Vertebrata</taxon>
        <taxon>Euteleostomi</taxon>
        <taxon>Mammalia</taxon>
        <taxon>Eutheria</taxon>
        <taxon>Euarchontoglires</taxon>
        <taxon>Primates</taxon>
        <taxon>Haplorrhini</taxon>
        <taxon>Catarrhini</taxon>
        <taxon>Hominidae</taxon>
        <taxon>Homo</taxon>
    </lineage>
</organism>
<sequence>MADDNFTVVTEFILLGLTDHAELKAVLFVVFLVIYAITLLRNLGMILLIQITSKLHTPMYFLLSCLSFVDACYSSAIAPKMLVNLLVVKATISFSACMVQHLCFGVFITTEGFLLSVMAYDRYVAIVSPLLYTVAMSDRKCVELVTGSWIGGIVNTLIHTISLRRLSFCRLNAVSHFFCDIPSLLKLSCSDTSMNELLLLTFSGVIAMATFLTVIISYIFIAFASLRIHSASGRQQAFSTCASHLTAVTIFYGTLIFSYIQPSSQYFVEQEKVVSMFYTLGIPMLNLLIHSLRNKDVKEAVKRAIEMKHFLC</sequence>
<reference key="1">
    <citation type="submission" date="2001-07" db="EMBL/GenBank/DDBJ databases">
        <title>Genome-wide discovery and analysis of human seven transmembrane helix receptor genes.</title>
        <authorList>
            <person name="Suwa M."/>
            <person name="Sato T."/>
            <person name="Okouchi I."/>
            <person name="Arita M."/>
            <person name="Futami K."/>
            <person name="Matsumoto S."/>
            <person name="Tsutsumi S."/>
            <person name="Aburatani H."/>
            <person name="Asai K."/>
            <person name="Akiyama Y."/>
        </authorList>
    </citation>
    <scope>NUCLEOTIDE SEQUENCE [GENOMIC DNA]</scope>
</reference>
<reference key="2">
    <citation type="journal article" date="2004" name="Proc. Natl. Acad. Sci. U.S.A.">
        <title>The human olfactory receptor gene family.</title>
        <authorList>
            <person name="Malnic B."/>
            <person name="Godfrey P.A."/>
            <person name="Buck L.B."/>
        </authorList>
    </citation>
    <scope>IDENTIFICATION</scope>
</reference>
<reference key="3">
    <citation type="journal article" date="2004" name="Proc. Natl. Acad. Sci. U.S.A.">
        <authorList>
            <person name="Malnic B."/>
            <person name="Godfrey P.A."/>
            <person name="Buck L.B."/>
        </authorList>
    </citation>
    <scope>ERRATUM OF PUBMED:14983052</scope>
</reference>
<dbReference type="EMBL" id="AB065595">
    <property type="protein sequence ID" value="BAC05823.1"/>
    <property type="molecule type" value="Genomic_DNA"/>
</dbReference>
<dbReference type="EMBL" id="BK004517">
    <property type="protein sequence ID" value="DAA04915.1"/>
    <property type="molecule type" value="Genomic_DNA"/>
</dbReference>
<dbReference type="CCDS" id="CCDS31522.1"/>
<dbReference type="RefSeq" id="NP_001005492.1">
    <property type="nucleotide sequence ID" value="NM_001005492.1"/>
</dbReference>
<dbReference type="SMR" id="Q8NH18"/>
<dbReference type="FunCoup" id="Q8NH18">
    <property type="interactions" value="416"/>
</dbReference>
<dbReference type="STRING" id="9606.ENSP00000310788"/>
<dbReference type="GlyCosmos" id="Q8NH18">
    <property type="glycosylation" value="1 site, No reported glycans"/>
</dbReference>
<dbReference type="GlyGen" id="Q8NH18">
    <property type="glycosylation" value="1 site"/>
</dbReference>
<dbReference type="PhosphoSitePlus" id="Q8NH18"/>
<dbReference type="BioMuta" id="OR5J2"/>
<dbReference type="DMDM" id="38372500"/>
<dbReference type="jPOST" id="Q8NH18"/>
<dbReference type="PaxDb" id="9606-ENSP00000310788"/>
<dbReference type="PeptideAtlas" id="Q8NH18"/>
<dbReference type="Antibodypedia" id="72064">
    <property type="antibodies" value="25 antibodies from 15 providers"/>
</dbReference>
<dbReference type="DNASU" id="282775"/>
<dbReference type="Ensembl" id="ENST00000312298.1">
    <property type="protein sequence ID" value="ENSP00000310788.1"/>
    <property type="gene ID" value="ENSG00000174957.1"/>
</dbReference>
<dbReference type="GeneID" id="282775"/>
<dbReference type="KEGG" id="hsa:282775"/>
<dbReference type="MANE-Select" id="ENST00000312298.1">
    <property type="protein sequence ID" value="ENSP00000310788.1"/>
    <property type="RefSeq nucleotide sequence ID" value="NM_001005492.1"/>
    <property type="RefSeq protein sequence ID" value="NP_001005492.1"/>
</dbReference>
<dbReference type="UCSC" id="uc010rjb.2">
    <property type="organism name" value="human"/>
</dbReference>
<dbReference type="AGR" id="HGNC:19612"/>
<dbReference type="CTD" id="282775"/>
<dbReference type="DisGeNET" id="282775"/>
<dbReference type="GeneCards" id="OR5J2"/>
<dbReference type="HGNC" id="HGNC:19612">
    <property type="gene designation" value="OR5J2"/>
</dbReference>
<dbReference type="HPA" id="ENSG00000174957">
    <property type="expression patterns" value="Not detected"/>
</dbReference>
<dbReference type="neXtProt" id="NX_Q8NH18"/>
<dbReference type="PharmGKB" id="PA134982020"/>
<dbReference type="VEuPathDB" id="HostDB:ENSG00000174957"/>
<dbReference type="eggNOG" id="ENOG502QVH7">
    <property type="taxonomic scope" value="Eukaryota"/>
</dbReference>
<dbReference type="GeneTree" id="ENSGT01130000278300"/>
<dbReference type="HOGENOM" id="CLU_012526_1_0_1"/>
<dbReference type="InParanoid" id="Q8NH18"/>
<dbReference type="OMA" id="SFCRLNA"/>
<dbReference type="OrthoDB" id="9575991at2759"/>
<dbReference type="PAN-GO" id="Q8NH18">
    <property type="GO annotations" value="2 GO annotations based on evolutionary models"/>
</dbReference>
<dbReference type="PhylomeDB" id="Q8NH18"/>
<dbReference type="TreeFam" id="TF352748"/>
<dbReference type="PathwayCommons" id="Q8NH18"/>
<dbReference type="Reactome" id="R-HSA-9752946">
    <property type="pathway name" value="Expression and translocation of olfactory receptors"/>
</dbReference>
<dbReference type="BioGRID-ORCS" id="282775">
    <property type="hits" value="7 hits in 745 CRISPR screens"/>
</dbReference>
<dbReference type="GeneWiki" id="OR5J2"/>
<dbReference type="GenomeRNAi" id="282775"/>
<dbReference type="Pharos" id="Q8NH18">
    <property type="development level" value="Tdark"/>
</dbReference>
<dbReference type="PRO" id="PR:Q8NH18"/>
<dbReference type="Proteomes" id="UP000005640">
    <property type="component" value="Chromosome 11"/>
</dbReference>
<dbReference type="RNAct" id="Q8NH18">
    <property type="molecule type" value="protein"/>
</dbReference>
<dbReference type="Bgee" id="ENSG00000174957">
    <property type="expression patterns" value="Expressed in C1 segment of cervical spinal cord"/>
</dbReference>
<dbReference type="ExpressionAtlas" id="Q8NH18">
    <property type="expression patterns" value="baseline and differential"/>
</dbReference>
<dbReference type="GO" id="GO:0005886">
    <property type="term" value="C:plasma membrane"/>
    <property type="evidence" value="ECO:0007669"/>
    <property type="project" value="UniProtKB-SubCell"/>
</dbReference>
<dbReference type="GO" id="GO:0004930">
    <property type="term" value="F:G protein-coupled receptor activity"/>
    <property type="evidence" value="ECO:0007669"/>
    <property type="project" value="UniProtKB-KW"/>
</dbReference>
<dbReference type="GO" id="GO:0005549">
    <property type="term" value="F:odorant binding"/>
    <property type="evidence" value="ECO:0000318"/>
    <property type="project" value="GO_Central"/>
</dbReference>
<dbReference type="GO" id="GO:0004984">
    <property type="term" value="F:olfactory receptor activity"/>
    <property type="evidence" value="ECO:0000318"/>
    <property type="project" value="GO_Central"/>
</dbReference>
<dbReference type="CDD" id="cd15415">
    <property type="entry name" value="7tmA_OR5J-like"/>
    <property type="match status" value="1"/>
</dbReference>
<dbReference type="FunFam" id="1.20.1070.10:FF:000003">
    <property type="entry name" value="Olfactory receptor"/>
    <property type="match status" value="1"/>
</dbReference>
<dbReference type="Gene3D" id="1.20.1070.10">
    <property type="entry name" value="Rhodopsin 7-helix transmembrane proteins"/>
    <property type="match status" value="1"/>
</dbReference>
<dbReference type="InterPro" id="IPR000276">
    <property type="entry name" value="GPCR_Rhodpsn"/>
</dbReference>
<dbReference type="InterPro" id="IPR017452">
    <property type="entry name" value="GPCR_Rhodpsn_7TM"/>
</dbReference>
<dbReference type="InterPro" id="IPR000725">
    <property type="entry name" value="Olfact_rcpt"/>
</dbReference>
<dbReference type="PANTHER" id="PTHR48018">
    <property type="entry name" value="OLFACTORY RECEPTOR"/>
    <property type="match status" value="1"/>
</dbReference>
<dbReference type="Pfam" id="PF13853">
    <property type="entry name" value="7tm_4"/>
    <property type="match status" value="1"/>
</dbReference>
<dbReference type="PRINTS" id="PR00245">
    <property type="entry name" value="OLFACTORYR"/>
</dbReference>
<dbReference type="SUPFAM" id="SSF81321">
    <property type="entry name" value="Family A G protein-coupled receptor-like"/>
    <property type="match status" value="1"/>
</dbReference>
<dbReference type="PROSITE" id="PS00237">
    <property type="entry name" value="G_PROTEIN_RECEP_F1_1"/>
    <property type="match status" value="1"/>
</dbReference>
<dbReference type="PROSITE" id="PS50262">
    <property type="entry name" value="G_PROTEIN_RECEP_F1_2"/>
    <property type="match status" value="1"/>
</dbReference>